<feature type="propeptide" id="PRO_0000024214" description="Leader sequence" evidence="3">
    <location>
        <begin position="1"/>
        <end position="8"/>
    </location>
</feature>
<feature type="chain" id="PRO_0000024215" description="Type II secretion system protein H">
    <location>
        <begin position="9"/>
        <end position="183"/>
    </location>
</feature>
<feature type="transmembrane region" description="Helical" evidence="4">
    <location>
        <begin position="9"/>
        <end position="28"/>
    </location>
</feature>
<feature type="modified residue" description="N-methylphenylalanine" evidence="3">
    <location>
        <position position="9"/>
    </location>
</feature>
<organism>
    <name type="scientific">Aeromonas hydrophila</name>
    <dbReference type="NCBI Taxonomy" id="644"/>
    <lineage>
        <taxon>Bacteria</taxon>
        <taxon>Pseudomonadati</taxon>
        <taxon>Pseudomonadota</taxon>
        <taxon>Gammaproteobacteria</taxon>
        <taxon>Aeromonadales</taxon>
        <taxon>Aeromonadaceae</taxon>
        <taxon>Aeromonas</taxon>
    </lineage>
</organism>
<name>GSPH_AERHY</name>
<keyword id="KW-0997">Cell inner membrane</keyword>
<keyword id="KW-1003">Cell membrane</keyword>
<keyword id="KW-0472">Membrane</keyword>
<keyword id="KW-0488">Methylation</keyword>
<keyword id="KW-0653">Protein transport</keyword>
<keyword id="KW-0812">Transmembrane</keyword>
<keyword id="KW-1133">Transmembrane helix</keyword>
<keyword id="KW-0813">Transport</keyword>
<comment type="function">
    <text evidence="1">Component of the type II secretion system required for the energy-dependent secretion of extracellular factors such as proteases and toxins from the periplasm. Part of the pseudopilus tip complex that is critical for the recognition and binding of secretion substrates.</text>
</comment>
<comment type="subunit">
    <text evidence="1">Type II secretion is composed of four main components: the outer membrane complex, the inner membrane complex, the cytoplasmic secretion ATPase and the periplasm-spanning pseudopilus. Interacts with core component ExeG.</text>
</comment>
<comment type="subcellular location">
    <subcellularLocation>
        <location evidence="1">Cell inner membrane</location>
        <topology evidence="2">Single-pass membrane protein</topology>
    </subcellularLocation>
</comment>
<comment type="PTM">
    <text evidence="1">Cleaved by prepilin peptidase.</text>
</comment>
<comment type="PTM">
    <text evidence="1">Methylated by prepilin peptidase at the amino group of the N-terminal phenylalanine once the leader sequence is cleaved by prepilin peptidase.</text>
</comment>
<comment type="similarity">
    <text evidence="4">Belongs to the GSP H family.</text>
</comment>
<gene>
    <name type="primary">exeH</name>
</gene>
<reference key="1">
    <citation type="journal article" date="1993" name="J. Bacteriol.">
        <title>Isolation and analysis of eight exe genes and their involvement in extracellular protein secretion and outer membrane assembly in Aeromonas hydrophila.</title>
        <authorList>
            <person name="Howard S.P."/>
            <person name="Critch J."/>
            <person name="Bedi A."/>
        </authorList>
    </citation>
    <scope>NUCLEOTIDE SEQUENCE [GENOMIC DNA]</scope>
    <source>
        <strain>Ah65</strain>
    </source>
</reference>
<proteinExistence type="inferred from homology"/>
<protein>
    <recommendedName>
        <fullName>Type II secretion system protein H</fullName>
        <shortName>T2SS minor pseudopilin H</shortName>
    </recommendedName>
    <alternativeName>
        <fullName>General secretion pathway protein H</fullName>
    </alternativeName>
</protein>
<accession>P31735</accession>
<evidence type="ECO:0000250" key="1">
    <source>
        <dbReference type="UniProtKB" id="Q00515"/>
    </source>
</evidence>
<evidence type="ECO:0000255" key="2"/>
<evidence type="ECO:0000255" key="3">
    <source>
        <dbReference type="PROSITE-ProRule" id="PRU01070"/>
    </source>
</evidence>
<evidence type="ECO:0000305" key="4"/>
<dbReference type="EMBL" id="X66504">
    <property type="protein sequence ID" value="CAA47129.1"/>
    <property type="molecule type" value="Genomic_DNA"/>
</dbReference>
<dbReference type="PIR" id="A49905">
    <property type="entry name" value="A49905"/>
</dbReference>
<dbReference type="SMR" id="P31735"/>
<dbReference type="GO" id="GO:0005886">
    <property type="term" value="C:plasma membrane"/>
    <property type="evidence" value="ECO:0007669"/>
    <property type="project" value="UniProtKB-SubCell"/>
</dbReference>
<dbReference type="GO" id="GO:0015627">
    <property type="term" value="C:type II protein secretion system complex"/>
    <property type="evidence" value="ECO:0007669"/>
    <property type="project" value="InterPro"/>
</dbReference>
<dbReference type="GO" id="GO:0015628">
    <property type="term" value="P:protein secretion by the type II secretion system"/>
    <property type="evidence" value="ECO:0007669"/>
    <property type="project" value="InterPro"/>
</dbReference>
<dbReference type="Gene3D" id="3.55.40.10">
    <property type="entry name" value="minor pseudopilin epsh domain"/>
    <property type="match status" value="1"/>
</dbReference>
<dbReference type="InterPro" id="IPR012902">
    <property type="entry name" value="N_methyl_site"/>
</dbReference>
<dbReference type="InterPro" id="IPR045584">
    <property type="entry name" value="Pilin-like"/>
</dbReference>
<dbReference type="InterPro" id="IPR022346">
    <property type="entry name" value="T2SS_GspH"/>
</dbReference>
<dbReference type="InterPro" id="IPR002416">
    <property type="entry name" value="T2SS_protein-GspH"/>
</dbReference>
<dbReference type="InterPro" id="IPR049875">
    <property type="entry name" value="TypeII_GspH"/>
</dbReference>
<dbReference type="NCBIfam" id="TIGR02532">
    <property type="entry name" value="IV_pilin_GFxxxE"/>
    <property type="match status" value="1"/>
</dbReference>
<dbReference type="NCBIfam" id="TIGR01708">
    <property type="entry name" value="typeII_sec_gspH"/>
    <property type="match status" value="1"/>
</dbReference>
<dbReference type="Pfam" id="PF12019">
    <property type="entry name" value="GspH"/>
    <property type="match status" value="1"/>
</dbReference>
<dbReference type="Pfam" id="PF07963">
    <property type="entry name" value="N_methyl"/>
    <property type="match status" value="1"/>
</dbReference>
<dbReference type="PRINTS" id="PR00885">
    <property type="entry name" value="BCTERIALGSPH"/>
</dbReference>
<dbReference type="SUPFAM" id="SSF54523">
    <property type="entry name" value="Pili subunits"/>
    <property type="match status" value="1"/>
</dbReference>
<dbReference type="PROSITE" id="PS00409">
    <property type="entry name" value="PROKAR_NTER_METHYL"/>
    <property type="match status" value="1"/>
</dbReference>
<sequence>MRRHRQSGFTLLEVLLVAMLMGLVATAVTLSMGGARGDRELDKQARRFMATLQQAQEYSVMDGRLVGLRIEDHGWQFMQRAAKDRKWQALTGDKILGQVQLPDTMLLAIELEGFSWRTESDEKTERGRDEKERTPQVLIFPGGELSPFVLTLTQQDEDVRYLRTVKADEFGRLRLLQDEEEEE</sequence>